<keyword id="KW-0067">ATP-binding</keyword>
<keyword id="KW-0238">DNA-binding</keyword>
<keyword id="KW-0479">Metal-binding</keyword>
<keyword id="KW-0547">Nucleotide-binding</keyword>
<keyword id="KW-0678">Repressor</keyword>
<keyword id="KW-0804">Transcription</keyword>
<keyword id="KW-0805">Transcription regulation</keyword>
<keyword id="KW-0862">Zinc</keyword>
<keyword id="KW-0863">Zinc-finger</keyword>
<feature type="chain" id="PRO_1000080780" description="Transcriptional repressor NrdR">
    <location>
        <begin position="1"/>
        <end position="154"/>
    </location>
</feature>
<feature type="domain" description="ATP-cone" evidence="1">
    <location>
        <begin position="46"/>
        <end position="136"/>
    </location>
</feature>
<feature type="zinc finger region" evidence="1">
    <location>
        <begin position="3"/>
        <end position="34"/>
    </location>
</feature>
<gene>
    <name evidence="1" type="primary">nrdR</name>
    <name type="ordered locus">Mkms_2216</name>
</gene>
<evidence type="ECO:0000255" key="1">
    <source>
        <dbReference type="HAMAP-Rule" id="MF_00440"/>
    </source>
</evidence>
<name>NRDR_MYCSK</name>
<accession>A1UF06</accession>
<protein>
    <recommendedName>
        <fullName evidence="1">Transcriptional repressor NrdR</fullName>
    </recommendedName>
</protein>
<dbReference type="EMBL" id="CP000518">
    <property type="protein sequence ID" value="ABL91414.1"/>
    <property type="molecule type" value="Genomic_DNA"/>
</dbReference>
<dbReference type="SMR" id="A1UF06"/>
<dbReference type="STRING" id="189918.Mkms_2216"/>
<dbReference type="KEGG" id="mkm:Mkms_2216"/>
<dbReference type="HOGENOM" id="CLU_108412_1_0_11"/>
<dbReference type="OrthoDB" id="9807461at2"/>
<dbReference type="GO" id="GO:0005524">
    <property type="term" value="F:ATP binding"/>
    <property type="evidence" value="ECO:0007669"/>
    <property type="project" value="UniProtKB-KW"/>
</dbReference>
<dbReference type="GO" id="GO:0003677">
    <property type="term" value="F:DNA binding"/>
    <property type="evidence" value="ECO:0007669"/>
    <property type="project" value="UniProtKB-KW"/>
</dbReference>
<dbReference type="GO" id="GO:0008270">
    <property type="term" value="F:zinc ion binding"/>
    <property type="evidence" value="ECO:0007669"/>
    <property type="project" value="UniProtKB-UniRule"/>
</dbReference>
<dbReference type="GO" id="GO:0045892">
    <property type="term" value="P:negative regulation of DNA-templated transcription"/>
    <property type="evidence" value="ECO:0007669"/>
    <property type="project" value="UniProtKB-UniRule"/>
</dbReference>
<dbReference type="HAMAP" id="MF_00440">
    <property type="entry name" value="NrdR"/>
    <property type="match status" value="1"/>
</dbReference>
<dbReference type="InterPro" id="IPR005144">
    <property type="entry name" value="ATP-cone_dom"/>
</dbReference>
<dbReference type="InterPro" id="IPR055173">
    <property type="entry name" value="NrdR-like_N"/>
</dbReference>
<dbReference type="InterPro" id="IPR003796">
    <property type="entry name" value="RNR_NrdR-like"/>
</dbReference>
<dbReference type="NCBIfam" id="TIGR00244">
    <property type="entry name" value="transcriptional regulator NrdR"/>
    <property type="match status" value="1"/>
</dbReference>
<dbReference type="PANTHER" id="PTHR30455">
    <property type="entry name" value="TRANSCRIPTIONAL REPRESSOR NRDR"/>
    <property type="match status" value="1"/>
</dbReference>
<dbReference type="PANTHER" id="PTHR30455:SF2">
    <property type="entry name" value="TRANSCRIPTIONAL REPRESSOR NRDR"/>
    <property type="match status" value="1"/>
</dbReference>
<dbReference type="Pfam" id="PF03477">
    <property type="entry name" value="ATP-cone"/>
    <property type="match status" value="1"/>
</dbReference>
<dbReference type="Pfam" id="PF22811">
    <property type="entry name" value="Zn_ribbon_NrdR"/>
    <property type="match status" value="1"/>
</dbReference>
<dbReference type="PROSITE" id="PS51161">
    <property type="entry name" value="ATP_CONE"/>
    <property type="match status" value="1"/>
</dbReference>
<sequence length="154" mass="17238">MHCPFCRHPDSRVVDSRETDEGQAIRRRRSCPECGRRFTTVETAVLAVVKRSGVTEPFSREKVIKGVRRACQGRQVDDDALNLLAQQVEDAVRATGSPEVPSHEVGLAILGPLRDLDEVAYLRFASVYRSFESAADFEREIEALRAHQDVTRSG</sequence>
<organism>
    <name type="scientific">Mycobacterium sp. (strain KMS)</name>
    <dbReference type="NCBI Taxonomy" id="189918"/>
    <lineage>
        <taxon>Bacteria</taxon>
        <taxon>Bacillati</taxon>
        <taxon>Actinomycetota</taxon>
        <taxon>Actinomycetes</taxon>
        <taxon>Mycobacteriales</taxon>
        <taxon>Mycobacteriaceae</taxon>
        <taxon>Mycobacterium</taxon>
    </lineage>
</organism>
<reference key="1">
    <citation type="submission" date="2006-12" db="EMBL/GenBank/DDBJ databases">
        <title>Complete sequence of chromosome of Mycobacterium sp. KMS.</title>
        <authorList>
            <consortium name="US DOE Joint Genome Institute"/>
            <person name="Copeland A."/>
            <person name="Lucas S."/>
            <person name="Lapidus A."/>
            <person name="Barry K."/>
            <person name="Detter J.C."/>
            <person name="Glavina del Rio T."/>
            <person name="Hammon N."/>
            <person name="Israni S."/>
            <person name="Dalin E."/>
            <person name="Tice H."/>
            <person name="Pitluck S."/>
            <person name="Kiss H."/>
            <person name="Brettin T."/>
            <person name="Bruce D."/>
            <person name="Han C."/>
            <person name="Tapia R."/>
            <person name="Gilna P."/>
            <person name="Schmutz J."/>
            <person name="Larimer F."/>
            <person name="Land M."/>
            <person name="Hauser L."/>
            <person name="Kyrpides N."/>
            <person name="Mikhailova N."/>
            <person name="Miller C.D."/>
            <person name="Richardson P."/>
        </authorList>
    </citation>
    <scope>NUCLEOTIDE SEQUENCE [LARGE SCALE GENOMIC DNA]</scope>
    <source>
        <strain>KMS</strain>
    </source>
</reference>
<comment type="function">
    <text evidence="1">Negatively regulates transcription of bacterial ribonucleotide reductase nrd genes and operons by binding to NrdR-boxes.</text>
</comment>
<comment type="cofactor">
    <cofactor evidence="1">
        <name>Zn(2+)</name>
        <dbReference type="ChEBI" id="CHEBI:29105"/>
    </cofactor>
    <text evidence="1">Binds 1 zinc ion.</text>
</comment>
<comment type="similarity">
    <text evidence="1">Belongs to the NrdR family.</text>
</comment>
<proteinExistence type="inferred from homology"/>